<protein>
    <recommendedName>
        <fullName evidence="1">2-succinyl-5-enolpyruvyl-6-hydroxy-3-cyclohexene-1-carboxylate synthase</fullName>
        <shortName evidence="1">SEPHCHC synthase</shortName>
        <ecNumber evidence="1">2.2.1.9</ecNumber>
    </recommendedName>
    <alternativeName>
        <fullName evidence="1">Menaquinone biosynthesis protein MenD</fullName>
    </alternativeName>
</protein>
<keyword id="KW-0460">Magnesium</keyword>
<keyword id="KW-0464">Manganese</keyword>
<keyword id="KW-0474">Menaquinone biosynthesis</keyword>
<keyword id="KW-0479">Metal-binding</keyword>
<keyword id="KW-1185">Reference proteome</keyword>
<keyword id="KW-0786">Thiamine pyrophosphate</keyword>
<keyword id="KW-0808">Transferase</keyword>
<evidence type="ECO:0000255" key="1">
    <source>
        <dbReference type="HAMAP-Rule" id="MF_01659"/>
    </source>
</evidence>
<organism>
    <name type="scientific">Porphyromonas gingivalis (strain ATCC BAA-308 / W83)</name>
    <dbReference type="NCBI Taxonomy" id="242619"/>
    <lineage>
        <taxon>Bacteria</taxon>
        <taxon>Pseudomonadati</taxon>
        <taxon>Bacteroidota</taxon>
        <taxon>Bacteroidia</taxon>
        <taxon>Bacteroidales</taxon>
        <taxon>Porphyromonadaceae</taxon>
        <taxon>Porphyromonas</taxon>
    </lineage>
</organism>
<reference key="1">
    <citation type="journal article" date="2003" name="J. Bacteriol.">
        <title>Complete genome sequence of the oral pathogenic bacterium Porphyromonas gingivalis strain W83.</title>
        <authorList>
            <person name="Nelson K.E."/>
            <person name="Fleischmann R.D."/>
            <person name="DeBoy R.T."/>
            <person name="Paulsen I.T."/>
            <person name="Fouts D.E."/>
            <person name="Eisen J.A."/>
            <person name="Daugherty S.C."/>
            <person name="Dodson R.J."/>
            <person name="Durkin A.S."/>
            <person name="Gwinn M.L."/>
            <person name="Haft D.H."/>
            <person name="Kolonay J.F."/>
            <person name="Nelson W.C."/>
            <person name="Mason T.M."/>
            <person name="Tallon L."/>
            <person name="Gray J."/>
            <person name="Granger D."/>
            <person name="Tettelin H."/>
            <person name="Dong H."/>
            <person name="Galvin J.L."/>
            <person name="Duncan M.J."/>
            <person name="Dewhirst F.E."/>
            <person name="Fraser C.M."/>
        </authorList>
    </citation>
    <scope>NUCLEOTIDE SEQUENCE [LARGE SCALE GENOMIC DNA]</scope>
    <source>
        <strain>ATCC BAA-308 / W83</strain>
    </source>
</reference>
<gene>
    <name evidence="1" type="primary">menD</name>
    <name type="ordered locus">PG_1524</name>
</gene>
<accession>Q7MUI9</accession>
<comment type="function">
    <text evidence="1">Catalyzes the thiamine diphosphate-dependent decarboxylation of 2-oxoglutarate and the subsequent addition of the resulting succinic semialdehyde-thiamine pyrophosphate anion to isochorismate to yield 2-succinyl-5-enolpyruvyl-6-hydroxy-3-cyclohexene-1-carboxylate (SEPHCHC).</text>
</comment>
<comment type="catalytic activity">
    <reaction evidence="1">
        <text>isochorismate + 2-oxoglutarate + H(+) = 5-enolpyruvoyl-6-hydroxy-2-succinyl-cyclohex-3-ene-1-carboxylate + CO2</text>
        <dbReference type="Rhea" id="RHEA:25593"/>
        <dbReference type="ChEBI" id="CHEBI:15378"/>
        <dbReference type="ChEBI" id="CHEBI:16526"/>
        <dbReference type="ChEBI" id="CHEBI:16810"/>
        <dbReference type="ChEBI" id="CHEBI:29780"/>
        <dbReference type="ChEBI" id="CHEBI:58818"/>
        <dbReference type="EC" id="2.2.1.9"/>
    </reaction>
</comment>
<comment type="cofactor">
    <cofactor evidence="1">
        <name>Mg(2+)</name>
        <dbReference type="ChEBI" id="CHEBI:18420"/>
    </cofactor>
    <cofactor evidence="1">
        <name>Mn(2+)</name>
        <dbReference type="ChEBI" id="CHEBI:29035"/>
    </cofactor>
</comment>
<comment type="cofactor">
    <cofactor evidence="1">
        <name>thiamine diphosphate</name>
        <dbReference type="ChEBI" id="CHEBI:58937"/>
    </cofactor>
    <text evidence="1">Binds 1 thiamine pyrophosphate per subunit.</text>
</comment>
<comment type="pathway">
    <text evidence="1">Quinol/quinone metabolism; 1,4-dihydroxy-2-naphthoate biosynthesis; 1,4-dihydroxy-2-naphthoate from chorismate: step 2/7.</text>
</comment>
<comment type="pathway">
    <text evidence="1">Quinol/quinone metabolism; menaquinone biosynthesis.</text>
</comment>
<comment type="subunit">
    <text evidence="1">Homodimer.</text>
</comment>
<comment type="similarity">
    <text evidence="1">Belongs to the TPP enzyme family. MenD subfamily.</text>
</comment>
<dbReference type="EC" id="2.2.1.9" evidence="1"/>
<dbReference type="EMBL" id="AE015924">
    <property type="protein sequence ID" value="AAQ66564.1"/>
    <property type="molecule type" value="Genomic_DNA"/>
</dbReference>
<dbReference type="SMR" id="Q7MUI9"/>
<dbReference type="STRING" id="242619.PG_1524"/>
<dbReference type="EnsemblBacteria" id="AAQ66564">
    <property type="protein sequence ID" value="AAQ66564"/>
    <property type="gene ID" value="PG_1524"/>
</dbReference>
<dbReference type="KEGG" id="pgi:PG_1524"/>
<dbReference type="PATRIC" id="fig|242619.8.peg.1415"/>
<dbReference type="eggNOG" id="COG1165">
    <property type="taxonomic scope" value="Bacteria"/>
</dbReference>
<dbReference type="HOGENOM" id="CLU_006051_3_0_10"/>
<dbReference type="BioCyc" id="PGIN242619:G1G02-1425-MONOMER"/>
<dbReference type="UniPathway" id="UPA00079"/>
<dbReference type="UniPathway" id="UPA01057">
    <property type="reaction ID" value="UER00164"/>
</dbReference>
<dbReference type="Proteomes" id="UP000000588">
    <property type="component" value="Chromosome"/>
</dbReference>
<dbReference type="GO" id="GO:0070204">
    <property type="term" value="F:2-succinyl-5-enolpyruvyl-6-hydroxy-3-cyclohexene-1-carboxylic-acid synthase activity"/>
    <property type="evidence" value="ECO:0007669"/>
    <property type="project" value="UniProtKB-UniRule"/>
</dbReference>
<dbReference type="GO" id="GO:0000287">
    <property type="term" value="F:magnesium ion binding"/>
    <property type="evidence" value="ECO:0007669"/>
    <property type="project" value="UniProtKB-UniRule"/>
</dbReference>
<dbReference type="GO" id="GO:0030145">
    <property type="term" value="F:manganese ion binding"/>
    <property type="evidence" value="ECO:0007669"/>
    <property type="project" value="UniProtKB-UniRule"/>
</dbReference>
<dbReference type="GO" id="GO:0030976">
    <property type="term" value="F:thiamine pyrophosphate binding"/>
    <property type="evidence" value="ECO:0007669"/>
    <property type="project" value="UniProtKB-UniRule"/>
</dbReference>
<dbReference type="GO" id="GO:0009234">
    <property type="term" value="P:menaquinone biosynthetic process"/>
    <property type="evidence" value="ECO:0007669"/>
    <property type="project" value="UniProtKB-UniRule"/>
</dbReference>
<dbReference type="CDD" id="cd07037">
    <property type="entry name" value="TPP_PYR_MenD"/>
    <property type="match status" value="1"/>
</dbReference>
<dbReference type="CDD" id="cd02009">
    <property type="entry name" value="TPP_SHCHC_synthase"/>
    <property type="match status" value="1"/>
</dbReference>
<dbReference type="Gene3D" id="3.40.50.970">
    <property type="match status" value="2"/>
</dbReference>
<dbReference type="Gene3D" id="3.40.50.1220">
    <property type="entry name" value="TPP-binding domain"/>
    <property type="match status" value="1"/>
</dbReference>
<dbReference type="HAMAP" id="MF_01659">
    <property type="entry name" value="MenD"/>
    <property type="match status" value="1"/>
</dbReference>
<dbReference type="InterPro" id="IPR004433">
    <property type="entry name" value="MenaQ_synth_MenD"/>
</dbReference>
<dbReference type="InterPro" id="IPR029061">
    <property type="entry name" value="THDP-binding"/>
</dbReference>
<dbReference type="InterPro" id="IPR012001">
    <property type="entry name" value="Thiamin_PyroP_enz_TPP-bd_dom"/>
</dbReference>
<dbReference type="NCBIfam" id="TIGR00173">
    <property type="entry name" value="menD"/>
    <property type="match status" value="1"/>
</dbReference>
<dbReference type="PANTHER" id="PTHR42916">
    <property type="entry name" value="2-SUCCINYL-5-ENOLPYRUVYL-6-HYDROXY-3-CYCLOHEXENE-1-CARBOXYLATE SYNTHASE"/>
    <property type="match status" value="1"/>
</dbReference>
<dbReference type="PANTHER" id="PTHR42916:SF1">
    <property type="entry name" value="PROTEIN PHYLLO, CHLOROPLASTIC"/>
    <property type="match status" value="1"/>
</dbReference>
<dbReference type="Pfam" id="PF02776">
    <property type="entry name" value="TPP_enzyme_N"/>
    <property type="match status" value="1"/>
</dbReference>
<dbReference type="PIRSF" id="PIRSF004983">
    <property type="entry name" value="MenD"/>
    <property type="match status" value="1"/>
</dbReference>
<dbReference type="SUPFAM" id="SSF52518">
    <property type="entry name" value="Thiamin diphosphate-binding fold (THDP-binding)"/>
    <property type="match status" value="2"/>
</dbReference>
<sequence length="577" mass="63938">MDSDYSDKKGVSVLMDLFEMKGIRKLVMSPGSRNAPLLFSFSRNPAFEKYVIADERSAGFFALGLALASGEAVGLVCTSGTAMLNYAPAVAEAFYRGIPLVAVTADRPAEWIDQDEGQTIRQEGAMAGFVKSYCSLRAEFDTSASAWYANRRLNEVLNHALMPRRGPVHINMSFCEPLYGTSSGYSGKERAITFVRERQELPEEVWDMLVKRFLEAPRVMIVAGFYPPDEDVSAALQDICKFPHTVLFAESLSNIRTDTGICTADRVLAAAGEDESLYPELLISFGGSLISRMLKTFLRRAKPAEHWGIDERFPAPDTFCALTHHICTGASGFWKEFAGRLKDKAPESLSPEGISYAGSWQKIKRKADLLHRTFMADAGWSDLKAFEVILRHIPHDAALHAANSTPVRYLQLFEHAHYAGGEWSNRGTNGIEGATSTAMGFSEVYSGTTLLITGDLSFMYDSNALWMPYVNGRIRVIVMRNGGGGIFRFIPGPDSLKELETCFETPLEVPVREMAGAYGWRYMKAVSAEELETVLPSFFASGDRAVLLEVETPRFENAPVLKSYFTYISGESYPVNR</sequence>
<proteinExistence type="inferred from homology"/>
<name>MEND_PORGI</name>
<feature type="chain" id="PRO_0000341797" description="2-succinyl-5-enolpyruvyl-6-hydroxy-3-cyclohexene-1-carboxylate synthase">
    <location>
        <begin position="1"/>
        <end position="577"/>
    </location>
</feature>